<accession>A9A6A5</accession>
<feature type="chain" id="PRO_1000131581" description="UPF0251 protein MmarC6_0272">
    <location>
        <begin position="1"/>
        <end position="130"/>
    </location>
</feature>
<comment type="similarity">
    <text evidence="1">Belongs to the UPF0251 family.</text>
</comment>
<evidence type="ECO:0000255" key="1">
    <source>
        <dbReference type="HAMAP-Rule" id="MF_00674"/>
    </source>
</evidence>
<organism>
    <name type="scientific">Methanococcus maripaludis (strain C6 / ATCC BAA-1332)</name>
    <dbReference type="NCBI Taxonomy" id="444158"/>
    <lineage>
        <taxon>Archaea</taxon>
        <taxon>Methanobacteriati</taxon>
        <taxon>Methanobacteriota</taxon>
        <taxon>Methanomada group</taxon>
        <taxon>Methanococci</taxon>
        <taxon>Methanococcales</taxon>
        <taxon>Methanococcaceae</taxon>
        <taxon>Methanococcus</taxon>
    </lineage>
</organism>
<sequence>MKFRKGRPKIPRLISEEPQFKLFKPAGTPGIELESEVLTFEELESLRLVDYLNQPHEEAADAMGISRRVFWNILKSARKKVADALINGKMIDIGGGYYKIRECNYEDECQRGRNCRYGVSNCLTLKKDSE</sequence>
<gene>
    <name type="ordered locus">MmarC6_0272</name>
</gene>
<name>Y272_METM6</name>
<proteinExistence type="inferred from homology"/>
<protein>
    <recommendedName>
        <fullName evidence="1">UPF0251 protein MmarC6_0272</fullName>
    </recommendedName>
</protein>
<dbReference type="EMBL" id="CP000867">
    <property type="protein sequence ID" value="ABX01093.1"/>
    <property type="molecule type" value="Genomic_DNA"/>
</dbReference>
<dbReference type="STRING" id="444158.MmarC6_0272"/>
<dbReference type="KEGG" id="mmx:MmarC6_0272"/>
<dbReference type="eggNOG" id="arCOG02238">
    <property type="taxonomic scope" value="Archaea"/>
</dbReference>
<dbReference type="HOGENOM" id="CLU_094511_1_0_2"/>
<dbReference type="OrthoDB" id="74471at2157"/>
<dbReference type="PhylomeDB" id="A9A6A5"/>
<dbReference type="HAMAP" id="MF_00674">
    <property type="entry name" value="UPF0251"/>
    <property type="match status" value="1"/>
</dbReference>
<dbReference type="InterPro" id="IPR002852">
    <property type="entry name" value="UPF0251"/>
</dbReference>
<dbReference type="PANTHER" id="PTHR37478">
    <property type="match status" value="1"/>
</dbReference>
<dbReference type="PANTHER" id="PTHR37478:SF2">
    <property type="entry name" value="UPF0251 PROTEIN TK0562"/>
    <property type="match status" value="1"/>
</dbReference>
<dbReference type="Pfam" id="PF02001">
    <property type="entry name" value="DUF134"/>
    <property type="match status" value="1"/>
</dbReference>
<reference key="1">
    <citation type="submission" date="2007-10" db="EMBL/GenBank/DDBJ databases">
        <title>Complete sequence of Methanococcus maripaludis C6.</title>
        <authorList>
            <consortium name="US DOE Joint Genome Institute"/>
            <person name="Copeland A."/>
            <person name="Lucas S."/>
            <person name="Lapidus A."/>
            <person name="Barry K."/>
            <person name="Glavina del Rio T."/>
            <person name="Dalin E."/>
            <person name="Tice H."/>
            <person name="Pitluck S."/>
            <person name="Clum A."/>
            <person name="Schmutz J."/>
            <person name="Larimer F."/>
            <person name="Land M."/>
            <person name="Hauser L."/>
            <person name="Kyrpides N."/>
            <person name="Mikhailova N."/>
            <person name="Sieprawska-Lupa M."/>
            <person name="Whitman W.B."/>
            <person name="Richardson P."/>
        </authorList>
    </citation>
    <scope>NUCLEOTIDE SEQUENCE [LARGE SCALE GENOMIC DNA]</scope>
    <source>
        <strain>C6 / ATCC BAA-1332</strain>
    </source>
</reference>